<feature type="chain" id="PRO_1000126654" description="Large ribosomal subunit protein bL31">
    <location>
        <begin position="1"/>
        <end position="69"/>
    </location>
</feature>
<name>RL31_MAGMM</name>
<sequence length="69" mass="7830">MKEGIHPKYEEATFTCASCSNEIKTRSTAGDLTLGICSECHPFYTGKHKLVDTAGRVERFRRKYGMQDQ</sequence>
<reference key="1">
    <citation type="journal article" date="2009" name="Appl. Environ. Microbiol.">
        <title>Complete genome sequence of the chemolithoautotrophic marine magnetotactic coccus strain MC-1.</title>
        <authorList>
            <person name="Schubbe S."/>
            <person name="Williams T.J."/>
            <person name="Xie G."/>
            <person name="Kiss H.E."/>
            <person name="Brettin T.S."/>
            <person name="Martinez D."/>
            <person name="Ross C.A."/>
            <person name="Schuler D."/>
            <person name="Cox B.L."/>
            <person name="Nealson K.H."/>
            <person name="Bazylinski D.A."/>
        </authorList>
    </citation>
    <scope>NUCLEOTIDE SEQUENCE [LARGE SCALE GENOMIC DNA]</scope>
    <source>
        <strain>ATCC BAA-1437 / JCM 17883 / MC-1</strain>
    </source>
</reference>
<organism>
    <name type="scientific">Magnetococcus marinus (strain ATCC BAA-1437 / JCM 17883 / MC-1)</name>
    <dbReference type="NCBI Taxonomy" id="156889"/>
    <lineage>
        <taxon>Bacteria</taxon>
        <taxon>Pseudomonadati</taxon>
        <taxon>Pseudomonadota</taxon>
        <taxon>Alphaproteobacteria</taxon>
        <taxon>Magnetococcales</taxon>
        <taxon>Magnetococcaceae</taxon>
        <taxon>Magnetococcus</taxon>
    </lineage>
</organism>
<gene>
    <name evidence="1" type="primary">rpmE</name>
    <name type="ordered locus">Mmc1_0136</name>
</gene>
<evidence type="ECO:0000255" key="1">
    <source>
        <dbReference type="HAMAP-Rule" id="MF_00501"/>
    </source>
</evidence>
<evidence type="ECO:0000305" key="2"/>
<accession>A0L3X0</accession>
<protein>
    <recommendedName>
        <fullName evidence="1">Large ribosomal subunit protein bL31</fullName>
    </recommendedName>
    <alternativeName>
        <fullName evidence="2">50S ribosomal protein L31</fullName>
    </alternativeName>
</protein>
<proteinExistence type="inferred from homology"/>
<comment type="function">
    <text evidence="1">Binds the 23S rRNA.</text>
</comment>
<comment type="subunit">
    <text evidence="1">Part of the 50S ribosomal subunit.</text>
</comment>
<comment type="similarity">
    <text evidence="1">Belongs to the bacterial ribosomal protein bL31 family. Type A subfamily.</text>
</comment>
<dbReference type="EMBL" id="CP000471">
    <property type="protein sequence ID" value="ABK42663.1"/>
    <property type="molecule type" value="Genomic_DNA"/>
</dbReference>
<dbReference type="RefSeq" id="WP_011711836.1">
    <property type="nucleotide sequence ID" value="NC_008576.1"/>
</dbReference>
<dbReference type="SMR" id="A0L3X0"/>
<dbReference type="STRING" id="156889.Mmc1_0136"/>
<dbReference type="KEGG" id="mgm:Mmc1_0136"/>
<dbReference type="eggNOG" id="COG0254">
    <property type="taxonomic scope" value="Bacteria"/>
</dbReference>
<dbReference type="HOGENOM" id="CLU_114306_4_0_5"/>
<dbReference type="OrthoDB" id="9803251at2"/>
<dbReference type="Proteomes" id="UP000002586">
    <property type="component" value="Chromosome"/>
</dbReference>
<dbReference type="GO" id="GO:1990904">
    <property type="term" value="C:ribonucleoprotein complex"/>
    <property type="evidence" value="ECO:0007669"/>
    <property type="project" value="UniProtKB-KW"/>
</dbReference>
<dbReference type="GO" id="GO:0005840">
    <property type="term" value="C:ribosome"/>
    <property type="evidence" value="ECO:0007669"/>
    <property type="project" value="UniProtKB-KW"/>
</dbReference>
<dbReference type="GO" id="GO:0019843">
    <property type="term" value="F:rRNA binding"/>
    <property type="evidence" value="ECO:0007669"/>
    <property type="project" value="UniProtKB-KW"/>
</dbReference>
<dbReference type="GO" id="GO:0003735">
    <property type="term" value="F:structural constituent of ribosome"/>
    <property type="evidence" value="ECO:0007669"/>
    <property type="project" value="InterPro"/>
</dbReference>
<dbReference type="GO" id="GO:0006412">
    <property type="term" value="P:translation"/>
    <property type="evidence" value="ECO:0007669"/>
    <property type="project" value="UniProtKB-UniRule"/>
</dbReference>
<dbReference type="Gene3D" id="4.10.830.30">
    <property type="entry name" value="Ribosomal protein L31"/>
    <property type="match status" value="1"/>
</dbReference>
<dbReference type="HAMAP" id="MF_00501">
    <property type="entry name" value="Ribosomal_bL31_1"/>
    <property type="match status" value="1"/>
</dbReference>
<dbReference type="InterPro" id="IPR034704">
    <property type="entry name" value="Ribosomal_bL28/bL31-like_sf"/>
</dbReference>
<dbReference type="InterPro" id="IPR002150">
    <property type="entry name" value="Ribosomal_bL31"/>
</dbReference>
<dbReference type="InterPro" id="IPR027491">
    <property type="entry name" value="Ribosomal_bL31_A"/>
</dbReference>
<dbReference type="InterPro" id="IPR042105">
    <property type="entry name" value="Ribosomal_bL31_sf"/>
</dbReference>
<dbReference type="NCBIfam" id="TIGR00105">
    <property type="entry name" value="L31"/>
    <property type="match status" value="1"/>
</dbReference>
<dbReference type="NCBIfam" id="NF000612">
    <property type="entry name" value="PRK00019.1"/>
    <property type="match status" value="1"/>
</dbReference>
<dbReference type="PANTHER" id="PTHR33280">
    <property type="entry name" value="50S RIBOSOMAL PROTEIN L31, CHLOROPLASTIC"/>
    <property type="match status" value="1"/>
</dbReference>
<dbReference type="PANTHER" id="PTHR33280:SF6">
    <property type="entry name" value="LARGE RIBOSOMAL SUBUNIT PROTEIN BL31A"/>
    <property type="match status" value="1"/>
</dbReference>
<dbReference type="Pfam" id="PF01197">
    <property type="entry name" value="Ribosomal_L31"/>
    <property type="match status" value="1"/>
</dbReference>
<dbReference type="PRINTS" id="PR01249">
    <property type="entry name" value="RIBOSOMALL31"/>
</dbReference>
<dbReference type="SUPFAM" id="SSF143800">
    <property type="entry name" value="L28p-like"/>
    <property type="match status" value="1"/>
</dbReference>
<keyword id="KW-1185">Reference proteome</keyword>
<keyword id="KW-0687">Ribonucleoprotein</keyword>
<keyword id="KW-0689">Ribosomal protein</keyword>
<keyword id="KW-0694">RNA-binding</keyword>
<keyword id="KW-0699">rRNA-binding</keyword>